<sequence length="149" mass="16811">MESLYRVPFTVLECPNLKLKKPSWLHMPSAMTVYAMVVVSYFLITGGIIYDVIVEPPSVGSMTDEHGHQRPVAFLAYRVNGQYIMEGLASSFLFTMGGLGFIILDRSNAPNIPKLNRFLLLFIGFVCVLLSFFMARVFMRMKLPGYLMG</sequence>
<reference key="1">
    <citation type="submission" date="2006-10" db="EMBL/GenBank/DDBJ databases">
        <authorList>
            <consortium name="Sanger Xenopus tropicalis EST/cDNA project"/>
        </authorList>
    </citation>
    <scope>NUCLEOTIDE SEQUENCE [LARGE SCALE MRNA]</scope>
    <source>
        <tissue>Neurula</tissue>
    </source>
</reference>
<reference key="2">
    <citation type="submission" date="2007-12" db="EMBL/GenBank/DDBJ databases">
        <authorList>
            <consortium name="NIH - Xenopus Gene Collection (XGC) project"/>
        </authorList>
    </citation>
    <scope>NUCLEOTIDE SEQUENCE [LARGE SCALE MRNA]</scope>
    <source>
        <tissue>Small intestine</tissue>
    </source>
</reference>
<dbReference type="EMBL" id="CR760329">
    <property type="protein sequence ID" value="CAJ83010.1"/>
    <property type="molecule type" value="mRNA"/>
</dbReference>
<dbReference type="EMBL" id="BC157801">
    <property type="protein sequence ID" value="AAI57802.1"/>
    <property type="molecule type" value="mRNA"/>
</dbReference>
<dbReference type="RefSeq" id="NP_001016656.1">
    <property type="nucleotide sequence ID" value="NM_001016656.2"/>
</dbReference>
<dbReference type="RefSeq" id="XP_012818053.1">
    <property type="nucleotide sequence ID" value="XM_012962599.2"/>
</dbReference>
<dbReference type="RefSeq" id="XP_017948883.1">
    <property type="nucleotide sequence ID" value="XM_018093394.1"/>
</dbReference>
<dbReference type="SMR" id="Q28IL7"/>
<dbReference type="FunCoup" id="Q28IL7">
    <property type="interactions" value="605"/>
</dbReference>
<dbReference type="STRING" id="8364.ENSXETP00000010494"/>
<dbReference type="PaxDb" id="8364-ENSXETP00000045608"/>
<dbReference type="GeneID" id="549410"/>
<dbReference type="KEGG" id="xtr:549410"/>
<dbReference type="AGR" id="Xenbase:XB-GENE-974364"/>
<dbReference type="CTD" id="58505"/>
<dbReference type="Xenbase" id="XB-GENE-974364">
    <property type="gene designation" value="ostc"/>
</dbReference>
<dbReference type="eggNOG" id="KOG3356">
    <property type="taxonomic scope" value="Eukaryota"/>
</dbReference>
<dbReference type="HOGENOM" id="CLU_109136_1_0_1"/>
<dbReference type="InParanoid" id="Q28IL7"/>
<dbReference type="OMA" id="CWIFMRM"/>
<dbReference type="OrthoDB" id="10256333at2759"/>
<dbReference type="PhylomeDB" id="Q28IL7"/>
<dbReference type="TreeFam" id="TF323315"/>
<dbReference type="UniPathway" id="UPA00378"/>
<dbReference type="Proteomes" id="UP000008143">
    <property type="component" value="Chromosome 1"/>
</dbReference>
<dbReference type="Bgee" id="ENSXETG00000021099">
    <property type="expression patterns" value="Expressed in testis and 14 other cell types or tissues"/>
</dbReference>
<dbReference type="GO" id="GO:0008250">
    <property type="term" value="C:oligosaccharyltransferase complex"/>
    <property type="evidence" value="ECO:0007669"/>
    <property type="project" value="InterPro"/>
</dbReference>
<dbReference type="GO" id="GO:0006486">
    <property type="term" value="P:protein glycosylation"/>
    <property type="evidence" value="ECO:0007669"/>
    <property type="project" value="UniProtKB-UniPathway"/>
</dbReference>
<dbReference type="InterPro" id="IPR021149">
    <property type="entry name" value="OligosaccharylTrfase_OST3/OST6"/>
</dbReference>
<dbReference type="InterPro" id="IPR042416">
    <property type="entry name" value="OSTC"/>
</dbReference>
<dbReference type="PANTHER" id="PTHR13160">
    <property type="entry name" value="OLIGOSACCHARYLTRANSFERASE COMPLEX SUBUNIT OSTC"/>
    <property type="match status" value="1"/>
</dbReference>
<dbReference type="PANTHER" id="PTHR13160:SF4">
    <property type="entry name" value="OLIGOSACCHARYLTRANSFERASE COMPLEX SUBUNIT OSTC"/>
    <property type="match status" value="1"/>
</dbReference>
<dbReference type="Pfam" id="PF04756">
    <property type="entry name" value="OST3_OST6"/>
    <property type="match status" value="1"/>
</dbReference>
<organism>
    <name type="scientific">Xenopus tropicalis</name>
    <name type="common">Western clawed frog</name>
    <name type="synonym">Silurana tropicalis</name>
    <dbReference type="NCBI Taxonomy" id="8364"/>
    <lineage>
        <taxon>Eukaryota</taxon>
        <taxon>Metazoa</taxon>
        <taxon>Chordata</taxon>
        <taxon>Craniata</taxon>
        <taxon>Vertebrata</taxon>
        <taxon>Euteleostomi</taxon>
        <taxon>Amphibia</taxon>
        <taxon>Batrachia</taxon>
        <taxon>Anura</taxon>
        <taxon>Pipoidea</taxon>
        <taxon>Pipidae</taxon>
        <taxon>Xenopodinae</taxon>
        <taxon>Xenopus</taxon>
        <taxon>Silurana</taxon>
    </lineage>
</organism>
<evidence type="ECO:0000250" key="1">
    <source>
        <dbReference type="UniProtKB" id="P86218"/>
    </source>
</evidence>
<evidence type="ECO:0000250" key="2">
    <source>
        <dbReference type="UniProtKB" id="Q9NRP0"/>
    </source>
</evidence>
<evidence type="ECO:0000255" key="3"/>
<evidence type="ECO:0000305" key="4"/>
<accession>Q28IL7</accession>
<feature type="chain" id="PRO_0000320608" description="Oligosaccharyltransferase complex subunit ostc">
    <location>
        <begin position="1"/>
        <end position="149"/>
    </location>
</feature>
<feature type="topological domain" description="Cytoplasmic" evidence="3">
    <location>
        <begin position="1"/>
        <end position="32"/>
    </location>
</feature>
<feature type="transmembrane region" description="Helical" evidence="3">
    <location>
        <begin position="33"/>
        <end position="53"/>
    </location>
</feature>
<feature type="topological domain" description="Extracellular" evidence="3">
    <location>
        <begin position="54"/>
        <end position="83"/>
    </location>
</feature>
<feature type="transmembrane region" description="Helical" evidence="3">
    <location>
        <begin position="84"/>
        <end position="104"/>
    </location>
</feature>
<feature type="topological domain" description="Cytoplasmic" evidence="3">
    <location>
        <begin position="105"/>
        <end position="117"/>
    </location>
</feature>
<feature type="transmembrane region" description="Helical" evidence="3">
    <location>
        <begin position="118"/>
        <end position="138"/>
    </location>
</feature>
<feature type="topological domain" description="Extracellular" evidence="3">
    <location>
        <begin position="139"/>
        <end position="149"/>
    </location>
</feature>
<comment type="function">
    <text evidence="2">Specific component of the STT3A-containing form of the oligosaccharyl transferase (OST) complex that catalyzes the initial transfer of a defined glycan (Glc(3)Man(9)GlcNAc(2) in eukaryotes) from the lipid carrier dolichol-pyrophosphate to an asparagine residue within an Asn-X-Ser/Thr consensus motif in nascent polypeptide chains, the first step in protein N-glycosylation. N-glycosylation occurs cotranslationally and the complex associates with the Sec61 complex at the channel-forming translocon complex that mediates protein translocation across the endoplasmic reticulum (ER). All subunits are required for a maximal enzyme activity.</text>
</comment>
<comment type="pathway">
    <text evidence="2">Protein modification; protein glycosylation.</text>
</comment>
<comment type="subunit">
    <text evidence="1">Specific component of the STT3A-containing form of the oligosaccharyltransferase (OST) complex.</text>
</comment>
<comment type="subcellular location">
    <subcellularLocation>
        <location evidence="4">Membrane</location>
        <topology evidence="4">Multi-pass membrane protein</topology>
    </subcellularLocation>
</comment>
<comment type="similarity">
    <text evidence="4">Belongs to the OSTC family.</text>
</comment>
<proteinExistence type="evidence at transcript level"/>
<name>OSTC_XENTR</name>
<keyword id="KW-0472">Membrane</keyword>
<keyword id="KW-1185">Reference proteome</keyword>
<keyword id="KW-0812">Transmembrane</keyword>
<keyword id="KW-1133">Transmembrane helix</keyword>
<gene>
    <name evidence="2" type="primary">ostc</name>
    <name type="synonym">dc2</name>
    <name type="ORF">TNeu100m23.1</name>
</gene>
<protein>
    <recommendedName>
        <fullName evidence="2">Oligosaccharyltransferase complex subunit ostc</fullName>
    </recommendedName>
</protein>